<organism>
    <name type="scientific">Pisum sativum</name>
    <name type="common">Garden pea</name>
    <name type="synonym">Lathyrus oleraceus</name>
    <dbReference type="NCBI Taxonomy" id="3888"/>
    <lineage>
        <taxon>Eukaryota</taxon>
        <taxon>Viridiplantae</taxon>
        <taxon>Streptophyta</taxon>
        <taxon>Embryophyta</taxon>
        <taxon>Tracheophyta</taxon>
        <taxon>Spermatophyta</taxon>
        <taxon>Magnoliopsida</taxon>
        <taxon>eudicotyledons</taxon>
        <taxon>Gunneridae</taxon>
        <taxon>Pentapetalae</taxon>
        <taxon>rosids</taxon>
        <taxon>fabids</taxon>
        <taxon>Fabales</taxon>
        <taxon>Fabaceae</taxon>
        <taxon>Papilionoideae</taxon>
        <taxon>50 kb inversion clade</taxon>
        <taxon>NPAAA clade</taxon>
        <taxon>Hologalegina</taxon>
        <taxon>IRL clade</taxon>
        <taxon>Fabeae</taxon>
        <taxon>Pisum</taxon>
    </lineage>
</organism>
<proteinExistence type="evidence at transcript level"/>
<gene>
    <name type="primary">PGM1</name>
    <name type="synonym">PGM</name>
</gene>
<accession>Q9SM60</accession>
<evidence type="ECO:0000250" key="1">
    <source>
        <dbReference type="UniProtKB" id="P00949"/>
    </source>
</evidence>
<evidence type="ECO:0000250" key="2">
    <source>
        <dbReference type="UniProtKB" id="P36871"/>
    </source>
</evidence>
<evidence type="ECO:0000250" key="3">
    <source>
        <dbReference type="UniProtKB" id="P93804"/>
    </source>
</evidence>
<evidence type="ECO:0000305" key="4"/>
<dbReference type="EC" id="5.4.2.2" evidence="3"/>
<dbReference type="EMBL" id="AJ250769">
    <property type="protein sequence ID" value="CAB60127.1"/>
    <property type="molecule type" value="mRNA"/>
</dbReference>
<dbReference type="SMR" id="Q9SM60"/>
<dbReference type="GO" id="GO:0005829">
    <property type="term" value="C:cytosol"/>
    <property type="evidence" value="ECO:0007669"/>
    <property type="project" value="TreeGrafter"/>
</dbReference>
<dbReference type="GO" id="GO:0000287">
    <property type="term" value="F:magnesium ion binding"/>
    <property type="evidence" value="ECO:0007669"/>
    <property type="project" value="InterPro"/>
</dbReference>
<dbReference type="GO" id="GO:0004614">
    <property type="term" value="F:phosphoglucomutase activity"/>
    <property type="evidence" value="ECO:0007669"/>
    <property type="project" value="UniProtKB-EC"/>
</dbReference>
<dbReference type="GO" id="GO:0006006">
    <property type="term" value="P:glucose metabolic process"/>
    <property type="evidence" value="ECO:0007669"/>
    <property type="project" value="UniProtKB-KW"/>
</dbReference>
<dbReference type="CDD" id="cd03085">
    <property type="entry name" value="PGM1"/>
    <property type="match status" value="1"/>
</dbReference>
<dbReference type="FunFam" id="3.30.310.50:FF:000002">
    <property type="entry name" value="Phosphoglucomutase 5"/>
    <property type="match status" value="1"/>
</dbReference>
<dbReference type="FunFam" id="3.40.120.10:FF:000004">
    <property type="entry name" value="Phosphoglucomutase 5"/>
    <property type="match status" value="1"/>
</dbReference>
<dbReference type="FunFam" id="3.40.120.10:FF:000005">
    <property type="entry name" value="Phosphoglucomutase 5"/>
    <property type="match status" value="1"/>
</dbReference>
<dbReference type="FunFam" id="3.40.120.10:FF:000009">
    <property type="entry name" value="Phosphoglucomutase, cytoplasmic 1"/>
    <property type="match status" value="1"/>
</dbReference>
<dbReference type="Gene3D" id="3.40.120.10">
    <property type="entry name" value="Alpha-D-Glucose-1,6-Bisphosphate, subunit A, domain 3"/>
    <property type="match status" value="3"/>
</dbReference>
<dbReference type="Gene3D" id="3.30.310.50">
    <property type="entry name" value="Alpha-D-phosphohexomutase, C-terminal domain"/>
    <property type="match status" value="1"/>
</dbReference>
<dbReference type="InterPro" id="IPR005844">
    <property type="entry name" value="A-D-PHexomutase_a/b/a-I"/>
</dbReference>
<dbReference type="InterPro" id="IPR016055">
    <property type="entry name" value="A-D-PHexomutase_a/b/a-I/II/III"/>
</dbReference>
<dbReference type="InterPro" id="IPR005845">
    <property type="entry name" value="A-D-PHexomutase_a/b/a-II"/>
</dbReference>
<dbReference type="InterPro" id="IPR005846">
    <property type="entry name" value="A-D-PHexomutase_a/b/a-III"/>
</dbReference>
<dbReference type="InterPro" id="IPR036900">
    <property type="entry name" value="A-D-PHexomutase_C_sf"/>
</dbReference>
<dbReference type="InterPro" id="IPR016066">
    <property type="entry name" value="A-D-PHexomutase_CS"/>
</dbReference>
<dbReference type="InterPro" id="IPR005841">
    <property type="entry name" value="Alpha-D-phosphohexomutase_SF"/>
</dbReference>
<dbReference type="InterPro" id="IPR045244">
    <property type="entry name" value="PGM"/>
</dbReference>
<dbReference type="NCBIfam" id="NF005737">
    <property type="entry name" value="PRK07564.1-1"/>
    <property type="match status" value="1"/>
</dbReference>
<dbReference type="PANTHER" id="PTHR22573:SF2">
    <property type="entry name" value="PHOSPHOGLUCOMUTASE"/>
    <property type="match status" value="1"/>
</dbReference>
<dbReference type="PANTHER" id="PTHR22573">
    <property type="entry name" value="PHOSPHOHEXOMUTASE FAMILY MEMBER"/>
    <property type="match status" value="1"/>
</dbReference>
<dbReference type="Pfam" id="PF24947">
    <property type="entry name" value="PGM1_C_vert_fung"/>
    <property type="match status" value="1"/>
</dbReference>
<dbReference type="Pfam" id="PF02878">
    <property type="entry name" value="PGM_PMM_I"/>
    <property type="match status" value="1"/>
</dbReference>
<dbReference type="Pfam" id="PF02879">
    <property type="entry name" value="PGM_PMM_II"/>
    <property type="match status" value="1"/>
</dbReference>
<dbReference type="Pfam" id="PF02880">
    <property type="entry name" value="PGM_PMM_III"/>
    <property type="match status" value="1"/>
</dbReference>
<dbReference type="PRINTS" id="PR00509">
    <property type="entry name" value="PGMPMM"/>
</dbReference>
<dbReference type="SUPFAM" id="SSF55957">
    <property type="entry name" value="Phosphoglucomutase, C-terminal domain"/>
    <property type="match status" value="1"/>
</dbReference>
<dbReference type="SUPFAM" id="SSF53738">
    <property type="entry name" value="Phosphoglucomutase, first 3 domains"/>
    <property type="match status" value="3"/>
</dbReference>
<dbReference type="PROSITE" id="PS00710">
    <property type="entry name" value="PGM_PMM"/>
    <property type="match status" value="1"/>
</dbReference>
<name>PGMC_PEA</name>
<protein>
    <recommendedName>
        <fullName>Phosphoglucomutase, cytoplasmic</fullName>
        <shortName>PGM</shortName>
        <ecNumber evidence="3">5.4.2.2</ecNumber>
    </recommendedName>
    <alternativeName>
        <fullName>Glucose phosphomutase</fullName>
    </alternativeName>
</protein>
<feature type="chain" id="PRO_0000147804" description="Phosphoglucomutase, cytoplasmic">
    <location>
        <begin position="1"/>
        <end position="582"/>
    </location>
</feature>
<feature type="active site" description="Phosphoserine intermediate" evidence="1">
    <location>
        <position position="124"/>
    </location>
</feature>
<feature type="binding site" evidence="1">
    <location>
        <position position="25"/>
    </location>
    <ligand>
        <name>alpha-D-glucose 1,6-bisphosphate</name>
        <dbReference type="ChEBI" id="CHEBI:58392"/>
    </ligand>
</feature>
<feature type="binding site" evidence="1">
    <location>
        <position position="124"/>
    </location>
    <ligand>
        <name>alpha-D-glucose 1,6-bisphosphate</name>
        <dbReference type="ChEBI" id="CHEBI:58392"/>
    </ligand>
</feature>
<feature type="binding site" description="via phosphate group" evidence="1">
    <location>
        <position position="124"/>
    </location>
    <ligand>
        <name>Mg(2+)</name>
        <dbReference type="ChEBI" id="CHEBI:18420"/>
    </ligand>
</feature>
<feature type="binding site" evidence="1">
    <location>
        <position position="300"/>
    </location>
    <ligand>
        <name>Mg(2+)</name>
        <dbReference type="ChEBI" id="CHEBI:18420"/>
    </ligand>
</feature>
<feature type="binding site" evidence="1">
    <location>
        <position position="302"/>
    </location>
    <ligand>
        <name>Mg(2+)</name>
        <dbReference type="ChEBI" id="CHEBI:18420"/>
    </ligand>
</feature>
<feature type="binding site" evidence="1">
    <location>
        <position position="304"/>
    </location>
    <ligand>
        <name>alpha-D-glucose 1,6-bisphosphate</name>
        <dbReference type="ChEBI" id="CHEBI:58392"/>
    </ligand>
</feature>
<feature type="binding site" evidence="1">
    <location>
        <position position="304"/>
    </location>
    <ligand>
        <name>Mg(2+)</name>
        <dbReference type="ChEBI" id="CHEBI:18420"/>
    </ligand>
</feature>
<feature type="binding site" evidence="1">
    <location>
        <position position="305"/>
    </location>
    <ligand>
        <name>alpha-D-glucose 1,6-bisphosphate</name>
        <dbReference type="ChEBI" id="CHEBI:58392"/>
    </ligand>
</feature>
<feature type="binding site" evidence="1">
    <location>
        <position position="368"/>
    </location>
    <ligand>
        <name>alpha-D-glucose 1,6-bisphosphate</name>
        <dbReference type="ChEBI" id="CHEBI:58392"/>
    </ligand>
</feature>
<feature type="binding site" evidence="1">
    <location>
        <position position="387"/>
    </location>
    <ligand>
        <name>alpha-D-glucose 1,6-bisphosphate</name>
        <dbReference type="ChEBI" id="CHEBI:58392"/>
    </ligand>
</feature>
<feature type="binding site" evidence="1">
    <location>
        <position position="389"/>
    </location>
    <ligand>
        <name>alpha-D-glucose 1,6-bisphosphate</name>
        <dbReference type="ChEBI" id="CHEBI:58392"/>
    </ligand>
</feature>
<feature type="binding site" evidence="1">
    <location>
        <position position="400"/>
    </location>
    <ligand>
        <name>alpha-D-glucose 1,6-bisphosphate</name>
        <dbReference type="ChEBI" id="CHEBI:58392"/>
    </ligand>
</feature>
<feature type="modified residue" description="Phosphoserine" evidence="1">
    <location>
        <position position="124"/>
    </location>
</feature>
<keyword id="KW-0119">Carbohydrate metabolism</keyword>
<keyword id="KW-0963">Cytoplasm</keyword>
<keyword id="KW-0313">Glucose metabolism</keyword>
<keyword id="KW-0413">Isomerase</keyword>
<keyword id="KW-0460">Magnesium</keyword>
<keyword id="KW-0479">Metal-binding</keyword>
<keyword id="KW-0597">Phosphoprotein</keyword>
<comment type="function">
    <text evidence="2 3">Catalyzes the reversible isomerization of alpha-D-glucose 1-phosphate to alpha-D-glucose 6-phosphate (By similarity). The mechanism proceeds via the intermediate compound alpha-D-glucose 1,6-bisphosphate (By similarity). This enzyme participates in both the breakdown and synthesis of glucose (By similarity).</text>
</comment>
<comment type="catalytic activity">
    <reaction evidence="3">
        <text>alpha-D-glucose 1-phosphate = alpha-D-glucose 6-phosphate</text>
        <dbReference type="Rhea" id="RHEA:23536"/>
        <dbReference type="ChEBI" id="CHEBI:58225"/>
        <dbReference type="ChEBI" id="CHEBI:58601"/>
        <dbReference type="EC" id="5.4.2.2"/>
    </reaction>
</comment>
<comment type="catalytic activity">
    <reaction evidence="3">
        <text>O-phospho-L-seryl-[protein] + alpha-D-glucose 1-phosphate = alpha-D-glucose 1,6-bisphosphate + L-seryl-[protein]</text>
        <dbReference type="Rhea" id="RHEA:68748"/>
        <dbReference type="Rhea" id="RHEA-COMP:9863"/>
        <dbReference type="Rhea" id="RHEA-COMP:11604"/>
        <dbReference type="ChEBI" id="CHEBI:29999"/>
        <dbReference type="ChEBI" id="CHEBI:58392"/>
        <dbReference type="ChEBI" id="CHEBI:58601"/>
        <dbReference type="ChEBI" id="CHEBI:83421"/>
    </reaction>
</comment>
<comment type="catalytic activity">
    <reaction evidence="3">
        <text>alpha-D-glucose 1,6-bisphosphate + L-seryl-[protein] = O-phospho-L-seryl-[protein] + alpha-D-glucose 6-phosphate</text>
        <dbReference type="Rhea" id="RHEA:68752"/>
        <dbReference type="Rhea" id="RHEA-COMP:9863"/>
        <dbReference type="Rhea" id="RHEA-COMP:11604"/>
        <dbReference type="ChEBI" id="CHEBI:29999"/>
        <dbReference type="ChEBI" id="CHEBI:58225"/>
        <dbReference type="ChEBI" id="CHEBI:58392"/>
        <dbReference type="ChEBI" id="CHEBI:83421"/>
    </reaction>
</comment>
<comment type="cofactor">
    <cofactor evidence="1">
        <name>Mg(2+)</name>
        <dbReference type="ChEBI" id="CHEBI:18420"/>
    </cofactor>
    <text evidence="1">Binds 1 Mg(2+) ion per subunit.</text>
</comment>
<comment type="subunit">
    <text evidence="1">Monomer.</text>
</comment>
<comment type="subcellular location">
    <subcellularLocation>
        <location evidence="3">Cytoplasm</location>
    </subcellularLocation>
</comment>
<comment type="similarity">
    <text evidence="4">Belongs to the phosphohexose mutase family.</text>
</comment>
<reference key="1">
    <citation type="journal article" date="2000" name="Plant Physiol.">
        <title>The rug3 locus of pea encodes plastidial phosphoglucomutase.</title>
        <authorList>
            <person name="Harrison C.J."/>
            <person name="Mould R.M."/>
            <person name="Leech M.J."/>
            <person name="Johnson S.A."/>
            <person name="Turner L."/>
            <person name="Schreck S.L."/>
            <person name="Baird K.M."/>
            <person name="Jack P.L."/>
            <person name="Rawsthorne S."/>
            <person name="Hedley C.L."/>
            <person name="Wang T.L."/>
        </authorList>
    </citation>
    <scope>NUCLEOTIDE SEQUENCE [MRNA]</scope>
    <source>
        <strain>BC1</strain>
        <tissue>Cotyledon</tissue>
    </source>
</reference>
<sequence>MALFTVSRIQTTPFDGQKPGTSGLRKKVKVFVQPHYLENFVQASFNALTEGKVRGATLVVSGDGRYYSEQAIQIITKMAAANGVRRIWIGQNGLLSTPAVSAVIRERVGVDGSKATGSFILTASHNPGGPNEDFGIKYNMENGGPAPEGITNKIYENTTTIKEYLIAPDLPNVDITTVGVTNFTGPEGPFDIEVFDSASDYIKLMKSIFDFESIRKLLTSPKFSFCYDALHGVAGAYAKRIFVDELGAQENSLINCVPKEDFGGGHPDPNLTYAKELVARMGLGKSEPEGEVPEFGAAADGDADRNMVLGKRFFVTPSDSVAIIAANAVEAIPYFSAGLKGVARSMPTSAALDVVAKHLNLKFFEVPTGWKFFGNLMDAGLCSVCGEESFGTGSDHIREKDGIWAVLAWLSILAYKTKDNLESKLVSVEDIVRQHWATYGRHYYTRYDYENVDAGAAKELMAHLVKLQSSLPEVNEIIKGASSDVSKVVHGDEFEYNDPVDGSISSHQGIRYLFEDGSRLIFRLSGTGSEGATIRLYIEQYEKDPSKIGRLSHEALAPLVEAALKLSKMEEFTGRSAPTVIT</sequence>